<accession>Q8Z983</accession>
<accession>Q7C7X8</accession>
<evidence type="ECO:0000255" key="1">
    <source>
        <dbReference type="HAMAP-Rule" id="MF_01374"/>
    </source>
</evidence>
<feature type="chain" id="PRO_0000309703" description="Hydroxyacylglutathione hydrolase">
    <location>
        <begin position="1"/>
        <end position="251"/>
    </location>
</feature>
<feature type="binding site" evidence="1">
    <location>
        <position position="53"/>
    </location>
    <ligand>
        <name>Zn(2+)</name>
        <dbReference type="ChEBI" id="CHEBI:29105"/>
        <label>1</label>
    </ligand>
</feature>
<feature type="binding site" evidence="1">
    <location>
        <position position="55"/>
    </location>
    <ligand>
        <name>Zn(2+)</name>
        <dbReference type="ChEBI" id="CHEBI:29105"/>
        <label>1</label>
    </ligand>
</feature>
<feature type="binding site" evidence="1">
    <location>
        <position position="57"/>
    </location>
    <ligand>
        <name>Zn(2+)</name>
        <dbReference type="ChEBI" id="CHEBI:29105"/>
        <label>2</label>
    </ligand>
</feature>
<feature type="binding site" evidence="1">
    <location>
        <position position="58"/>
    </location>
    <ligand>
        <name>Zn(2+)</name>
        <dbReference type="ChEBI" id="CHEBI:29105"/>
        <label>2</label>
    </ligand>
</feature>
<feature type="binding site" evidence="1">
    <location>
        <position position="110"/>
    </location>
    <ligand>
        <name>Zn(2+)</name>
        <dbReference type="ChEBI" id="CHEBI:29105"/>
        <label>1</label>
    </ligand>
</feature>
<feature type="binding site" evidence="1">
    <location>
        <position position="127"/>
    </location>
    <ligand>
        <name>Zn(2+)</name>
        <dbReference type="ChEBI" id="CHEBI:29105"/>
        <label>1</label>
    </ligand>
</feature>
<feature type="binding site" evidence="1">
    <location>
        <position position="127"/>
    </location>
    <ligand>
        <name>Zn(2+)</name>
        <dbReference type="ChEBI" id="CHEBI:29105"/>
        <label>2</label>
    </ligand>
</feature>
<feature type="binding site" evidence="1">
    <location>
        <position position="165"/>
    </location>
    <ligand>
        <name>Zn(2+)</name>
        <dbReference type="ChEBI" id="CHEBI:29105"/>
        <label>2</label>
    </ligand>
</feature>
<sequence>MNLNSIPAFQDNYIWVLTNDEGRCVIVDPGEAAPVLKAIAAHKWMPEAIFLTHHHYDHVGGVKELLQHFPQMTVYGPAETQDKGATHLVGDGDTIRVLGEKFTLFATPGHTLGHVCYFSHPYLFCGDTLFSGGCGRLFEGTPSQMYQSLMKINSLPDDTLICSAHEYTLANIKFALSILPHDSFINEYYRKVKELRVKKQMTLPVILKNERKINLFLRTEDIDLINEINKETILQQPEARFAWLRSKKDTF</sequence>
<protein>
    <recommendedName>
        <fullName evidence="1">Hydroxyacylglutathione hydrolase</fullName>
        <ecNumber evidence="1">3.1.2.6</ecNumber>
    </recommendedName>
    <alternativeName>
        <fullName evidence="1">Glyoxalase II</fullName>
        <shortName evidence="1">Glx II</shortName>
    </alternativeName>
</protein>
<dbReference type="EC" id="3.1.2.6" evidence="1"/>
<dbReference type="EMBL" id="AE014613">
    <property type="protein sequence ID" value="AAO70180.1"/>
    <property type="molecule type" value="Genomic_DNA"/>
</dbReference>
<dbReference type="EMBL" id="AL513382">
    <property type="protein sequence ID" value="CAD08715.1"/>
    <property type="molecule type" value="Genomic_DNA"/>
</dbReference>
<dbReference type="RefSeq" id="NP_454864.1">
    <property type="nucleotide sequence ID" value="NC_003198.1"/>
</dbReference>
<dbReference type="RefSeq" id="WP_001052766.1">
    <property type="nucleotide sequence ID" value="NZ_WSUR01000037.1"/>
</dbReference>
<dbReference type="SMR" id="Q8Z983"/>
<dbReference type="STRING" id="220341.gene:17584318"/>
<dbReference type="KEGG" id="stt:t2604"/>
<dbReference type="KEGG" id="sty:STY0282"/>
<dbReference type="PATRIC" id="fig|220341.7.peg.284"/>
<dbReference type="eggNOG" id="COG0491">
    <property type="taxonomic scope" value="Bacteria"/>
</dbReference>
<dbReference type="HOGENOM" id="CLU_030571_4_1_6"/>
<dbReference type="OMA" id="NYIWLLQ"/>
<dbReference type="OrthoDB" id="9802248at2"/>
<dbReference type="UniPathway" id="UPA00619">
    <property type="reaction ID" value="UER00676"/>
</dbReference>
<dbReference type="Proteomes" id="UP000000541">
    <property type="component" value="Chromosome"/>
</dbReference>
<dbReference type="Proteomes" id="UP000002670">
    <property type="component" value="Chromosome"/>
</dbReference>
<dbReference type="GO" id="GO:0004416">
    <property type="term" value="F:hydroxyacylglutathione hydrolase activity"/>
    <property type="evidence" value="ECO:0007669"/>
    <property type="project" value="UniProtKB-UniRule"/>
</dbReference>
<dbReference type="GO" id="GO:0046872">
    <property type="term" value="F:metal ion binding"/>
    <property type="evidence" value="ECO:0007669"/>
    <property type="project" value="UniProtKB-KW"/>
</dbReference>
<dbReference type="GO" id="GO:0019243">
    <property type="term" value="P:methylglyoxal catabolic process to D-lactate via S-lactoyl-glutathione"/>
    <property type="evidence" value="ECO:0007669"/>
    <property type="project" value="InterPro"/>
</dbReference>
<dbReference type="CDD" id="cd07723">
    <property type="entry name" value="hydroxyacylglutathione_hydrolase_MBL-fold"/>
    <property type="match status" value="1"/>
</dbReference>
<dbReference type="Gene3D" id="3.60.15.10">
    <property type="entry name" value="Ribonuclease Z/Hydroxyacylglutathione hydrolase-like"/>
    <property type="match status" value="1"/>
</dbReference>
<dbReference type="HAMAP" id="MF_01374">
    <property type="entry name" value="Glyoxalase_2"/>
    <property type="match status" value="1"/>
</dbReference>
<dbReference type="InterPro" id="IPR035680">
    <property type="entry name" value="Clx_II_MBL"/>
</dbReference>
<dbReference type="InterPro" id="IPR050110">
    <property type="entry name" value="Glyoxalase_II_hydrolase"/>
</dbReference>
<dbReference type="InterPro" id="IPR032282">
    <property type="entry name" value="HAGH_C"/>
</dbReference>
<dbReference type="InterPro" id="IPR017782">
    <property type="entry name" value="Hydroxyacylglutathione_Hdrlase"/>
</dbReference>
<dbReference type="InterPro" id="IPR001279">
    <property type="entry name" value="Metallo-B-lactamas"/>
</dbReference>
<dbReference type="InterPro" id="IPR036866">
    <property type="entry name" value="RibonucZ/Hydroxyglut_hydro"/>
</dbReference>
<dbReference type="NCBIfam" id="TIGR03413">
    <property type="entry name" value="GSH_gloB"/>
    <property type="match status" value="1"/>
</dbReference>
<dbReference type="NCBIfam" id="NF007597">
    <property type="entry name" value="PRK10241.1"/>
    <property type="match status" value="1"/>
</dbReference>
<dbReference type="PANTHER" id="PTHR43705">
    <property type="entry name" value="HYDROXYACYLGLUTATHIONE HYDROLASE"/>
    <property type="match status" value="1"/>
</dbReference>
<dbReference type="PANTHER" id="PTHR43705:SF1">
    <property type="entry name" value="HYDROXYACYLGLUTATHIONE HYDROLASE GLOB"/>
    <property type="match status" value="1"/>
</dbReference>
<dbReference type="Pfam" id="PF16123">
    <property type="entry name" value="HAGH_C"/>
    <property type="match status" value="1"/>
</dbReference>
<dbReference type="Pfam" id="PF00753">
    <property type="entry name" value="Lactamase_B"/>
    <property type="match status" value="1"/>
</dbReference>
<dbReference type="PIRSF" id="PIRSF005457">
    <property type="entry name" value="Glx"/>
    <property type="match status" value="1"/>
</dbReference>
<dbReference type="SMART" id="SM00849">
    <property type="entry name" value="Lactamase_B"/>
    <property type="match status" value="1"/>
</dbReference>
<dbReference type="SUPFAM" id="SSF56281">
    <property type="entry name" value="Metallo-hydrolase/oxidoreductase"/>
    <property type="match status" value="1"/>
</dbReference>
<proteinExistence type="inferred from homology"/>
<keyword id="KW-0378">Hydrolase</keyword>
<keyword id="KW-0479">Metal-binding</keyword>
<keyword id="KW-0862">Zinc</keyword>
<reference key="1">
    <citation type="journal article" date="2001" name="Nature">
        <title>Complete genome sequence of a multiple drug resistant Salmonella enterica serovar Typhi CT18.</title>
        <authorList>
            <person name="Parkhill J."/>
            <person name="Dougan G."/>
            <person name="James K.D."/>
            <person name="Thomson N.R."/>
            <person name="Pickard D."/>
            <person name="Wain J."/>
            <person name="Churcher C.M."/>
            <person name="Mungall K.L."/>
            <person name="Bentley S.D."/>
            <person name="Holden M.T.G."/>
            <person name="Sebaihia M."/>
            <person name="Baker S."/>
            <person name="Basham D."/>
            <person name="Brooks K."/>
            <person name="Chillingworth T."/>
            <person name="Connerton P."/>
            <person name="Cronin A."/>
            <person name="Davis P."/>
            <person name="Davies R.M."/>
            <person name="Dowd L."/>
            <person name="White N."/>
            <person name="Farrar J."/>
            <person name="Feltwell T."/>
            <person name="Hamlin N."/>
            <person name="Haque A."/>
            <person name="Hien T.T."/>
            <person name="Holroyd S."/>
            <person name="Jagels K."/>
            <person name="Krogh A."/>
            <person name="Larsen T.S."/>
            <person name="Leather S."/>
            <person name="Moule S."/>
            <person name="O'Gaora P."/>
            <person name="Parry C."/>
            <person name="Quail M.A."/>
            <person name="Rutherford K.M."/>
            <person name="Simmonds M."/>
            <person name="Skelton J."/>
            <person name="Stevens K."/>
            <person name="Whitehead S."/>
            <person name="Barrell B.G."/>
        </authorList>
    </citation>
    <scope>NUCLEOTIDE SEQUENCE [LARGE SCALE GENOMIC DNA]</scope>
    <source>
        <strain>CT18</strain>
    </source>
</reference>
<reference key="2">
    <citation type="journal article" date="2003" name="J. Bacteriol.">
        <title>Comparative genomics of Salmonella enterica serovar Typhi strains Ty2 and CT18.</title>
        <authorList>
            <person name="Deng W."/>
            <person name="Liou S.-R."/>
            <person name="Plunkett G. III"/>
            <person name="Mayhew G.F."/>
            <person name="Rose D.J."/>
            <person name="Burland V."/>
            <person name="Kodoyianni V."/>
            <person name="Schwartz D.C."/>
            <person name="Blattner F.R."/>
        </authorList>
    </citation>
    <scope>NUCLEOTIDE SEQUENCE [LARGE SCALE GENOMIC DNA]</scope>
    <source>
        <strain>ATCC 700931 / Ty2</strain>
    </source>
</reference>
<gene>
    <name evidence="1" type="primary">gloB</name>
    <name type="ordered locus">STY0282</name>
    <name type="ordered locus">t2604</name>
</gene>
<organism>
    <name type="scientific">Salmonella typhi</name>
    <dbReference type="NCBI Taxonomy" id="90370"/>
    <lineage>
        <taxon>Bacteria</taxon>
        <taxon>Pseudomonadati</taxon>
        <taxon>Pseudomonadota</taxon>
        <taxon>Gammaproteobacteria</taxon>
        <taxon>Enterobacterales</taxon>
        <taxon>Enterobacteriaceae</taxon>
        <taxon>Salmonella</taxon>
    </lineage>
</organism>
<name>GLO2_SALTI</name>
<comment type="function">
    <text evidence="1">Thiolesterase that catalyzes the hydrolysis of S-D-lactoyl-glutathione to form glutathione and D-lactic acid.</text>
</comment>
<comment type="catalytic activity">
    <reaction evidence="1">
        <text>an S-(2-hydroxyacyl)glutathione + H2O = a 2-hydroxy carboxylate + glutathione + H(+)</text>
        <dbReference type="Rhea" id="RHEA:21864"/>
        <dbReference type="ChEBI" id="CHEBI:15377"/>
        <dbReference type="ChEBI" id="CHEBI:15378"/>
        <dbReference type="ChEBI" id="CHEBI:57925"/>
        <dbReference type="ChEBI" id="CHEBI:58896"/>
        <dbReference type="ChEBI" id="CHEBI:71261"/>
        <dbReference type="EC" id="3.1.2.6"/>
    </reaction>
</comment>
<comment type="cofactor">
    <cofactor evidence="1">
        <name>Zn(2+)</name>
        <dbReference type="ChEBI" id="CHEBI:29105"/>
    </cofactor>
    <text evidence="1">Binds 2 Zn(2+) ions per subunit.</text>
</comment>
<comment type="pathway">
    <text evidence="1">Secondary metabolite metabolism; methylglyoxal degradation; (R)-lactate from methylglyoxal: step 2/2.</text>
</comment>
<comment type="subunit">
    <text evidence="1">Monomer.</text>
</comment>
<comment type="similarity">
    <text evidence="1">Belongs to the metallo-beta-lactamase superfamily. Glyoxalase II family.</text>
</comment>